<accession>A6VLG0</accession>
<reference key="1">
    <citation type="journal article" date="2010" name="BMC Genomics">
        <title>A genomic perspective on the potential of Actinobacillus succinogenes for industrial succinate production.</title>
        <authorList>
            <person name="McKinlay J.B."/>
            <person name="Laivenieks M."/>
            <person name="Schindler B.D."/>
            <person name="McKinlay A.A."/>
            <person name="Siddaramappa S."/>
            <person name="Challacombe J.F."/>
            <person name="Lowry S.R."/>
            <person name="Clum A."/>
            <person name="Lapidus A.L."/>
            <person name="Burkhart K.B."/>
            <person name="Harkins V."/>
            <person name="Vieille C."/>
        </authorList>
    </citation>
    <scope>NUCLEOTIDE SEQUENCE [LARGE SCALE GENOMIC DNA]</scope>
    <source>
        <strain>ATCC 55618 / DSM 22257 / CCUG 43843 / 130Z</strain>
    </source>
</reference>
<gene>
    <name evidence="1" type="primary">rsmJ</name>
    <name type="ordered locus">Asuc_0430</name>
</gene>
<organism>
    <name type="scientific">Actinobacillus succinogenes (strain ATCC 55618 / DSM 22257 / CCUG 43843 / 130Z)</name>
    <dbReference type="NCBI Taxonomy" id="339671"/>
    <lineage>
        <taxon>Bacteria</taxon>
        <taxon>Pseudomonadati</taxon>
        <taxon>Pseudomonadota</taxon>
        <taxon>Gammaproteobacteria</taxon>
        <taxon>Pasteurellales</taxon>
        <taxon>Pasteurellaceae</taxon>
        <taxon>Actinobacillus</taxon>
    </lineage>
</organism>
<feature type="chain" id="PRO_0000318551" description="Ribosomal RNA small subunit methyltransferase J">
    <location>
        <begin position="1"/>
        <end position="257"/>
    </location>
</feature>
<feature type="binding site" evidence="1">
    <location>
        <begin position="109"/>
        <end position="110"/>
    </location>
    <ligand>
        <name>S-adenosyl-L-methionine</name>
        <dbReference type="ChEBI" id="CHEBI:59789"/>
    </ligand>
</feature>
<feature type="binding site" evidence="1">
    <location>
        <begin position="125"/>
        <end position="126"/>
    </location>
    <ligand>
        <name>S-adenosyl-L-methionine</name>
        <dbReference type="ChEBI" id="CHEBI:59789"/>
    </ligand>
</feature>
<feature type="binding site" evidence="1">
    <location>
        <position position="179"/>
    </location>
    <ligand>
        <name>S-adenosyl-L-methionine</name>
        <dbReference type="ChEBI" id="CHEBI:59789"/>
    </ligand>
</feature>
<proteinExistence type="inferred from homology"/>
<protein>
    <recommendedName>
        <fullName evidence="1">Ribosomal RNA small subunit methyltransferase J</fullName>
        <ecNumber evidence="1">2.1.1.242</ecNumber>
    </recommendedName>
    <alternativeName>
        <fullName evidence="1">16S rRNA m2G1516 methyltransferase</fullName>
    </alternativeName>
    <alternativeName>
        <fullName evidence="1">rRNA (guanine-N(2)-)-methyltransferase</fullName>
    </alternativeName>
</protein>
<keyword id="KW-0963">Cytoplasm</keyword>
<keyword id="KW-0489">Methyltransferase</keyword>
<keyword id="KW-1185">Reference proteome</keyword>
<keyword id="KW-0698">rRNA processing</keyword>
<keyword id="KW-0949">S-adenosyl-L-methionine</keyword>
<keyword id="KW-0808">Transferase</keyword>
<sequence>MMIQLRSEIKTDENLTALFRRQCEAAGLIHDETSPLALVQAAMGEHDWRLELRKLDEPKLGAVFVDFAGGVMAHRRKFGGGRGEAVAKAIGVKGEELPTVIDATAGLGRDAFVLASVGCRVRLVERHPVVRLLLQDGLRRAYDDSEIGESMRRNMQLLTVNHIAELDPARDFADAVYLDPMYPHKQKSALVKKEMRVFQHLVGTDSDADALLEPARKLARKRVVVKRPDYAGFLAQTPPHFSRETKNHRFDIYLPLI</sequence>
<evidence type="ECO:0000255" key="1">
    <source>
        <dbReference type="HAMAP-Rule" id="MF_01523"/>
    </source>
</evidence>
<name>RSMJ_ACTSZ</name>
<dbReference type="EC" id="2.1.1.242" evidence="1"/>
<dbReference type="EMBL" id="CP000746">
    <property type="protein sequence ID" value="ABR73807.1"/>
    <property type="molecule type" value="Genomic_DNA"/>
</dbReference>
<dbReference type="RefSeq" id="WP_012072192.1">
    <property type="nucleotide sequence ID" value="NC_009655.1"/>
</dbReference>
<dbReference type="SMR" id="A6VLG0"/>
<dbReference type="STRING" id="339671.Asuc_0430"/>
<dbReference type="KEGG" id="asu:Asuc_0430"/>
<dbReference type="eggNOG" id="COG0742">
    <property type="taxonomic scope" value="Bacteria"/>
</dbReference>
<dbReference type="HOGENOM" id="CLU_076324_0_1_6"/>
<dbReference type="OrthoDB" id="3191794at2"/>
<dbReference type="Proteomes" id="UP000001114">
    <property type="component" value="Chromosome"/>
</dbReference>
<dbReference type="GO" id="GO:0005737">
    <property type="term" value="C:cytoplasm"/>
    <property type="evidence" value="ECO:0007669"/>
    <property type="project" value="UniProtKB-SubCell"/>
</dbReference>
<dbReference type="GO" id="GO:0008990">
    <property type="term" value="F:rRNA (guanine-N2-)-methyltransferase activity"/>
    <property type="evidence" value="ECO:0007669"/>
    <property type="project" value="UniProtKB-UniRule"/>
</dbReference>
<dbReference type="Gene3D" id="3.40.50.150">
    <property type="entry name" value="Vaccinia Virus protein VP39"/>
    <property type="match status" value="1"/>
</dbReference>
<dbReference type="Gene3D" id="3.40.1630.10">
    <property type="entry name" value="YhiQ-like domain"/>
    <property type="match status" value="1"/>
</dbReference>
<dbReference type="HAMAP" id="MF_01523">
    <property type="entry name" value="16SrRNA_methyltr_J"/>
    <property type="match status" value="1"/>
</dbReference>
<dbReference type="InterPro" id="IPR007536">
    <property type="entry name" value="16SrRNA_methylTrfase_J"/>
</dbReference>
<dbReference type="InterPro" id="IPR029063">
    <property type="entry name" value="SAM-dependent_MTases_sf"/>
</dbReference>
<dbReference type="PANTHER" id="PTHR36112">
    <property type="entry name" value="RIBOSOMAL RNA SMALL SUBUNIT METHYLTRANSFERASE J"/>
    <property type="match status" value="1"/>
</dbReference>
<dbReference type="PANTHER" id="PTHR36112:SF1">
    <property type="entry name" value="RIBOSOMAL RNA SMALL SUBUNIT METHYLTRANSFERASE J"/>
    <property type="match status" value="1"/>
</dbReference>
<dbReference type="Pfam" id="PF04445">
    <property type="entry name" value="SAM_MT"/>
    <property type="match status" value="1"/>
</dbReference>
<dbReference type="SUPFAM" id="SSF53335">
    <property type="entry name" value="S-adenosyl-L-methionine-dependent methyltransferases"/>
    <property type="match status" value="1"/>
</dbReference>
<comment type="function">
    <text evidence="1">Specifically methylates the guanosine in position 1516 of 16S rRNA.</text>
</comment>
<comment type="catalytic activity">
    <reaction evidence="1">
        <text>guanosine(1516) in 16S rRNA + S-adenosyl-L-methionine = N(2)-methylguanosine(1516) in 16S rRNA + S-adenosyl-L-homocysteine + H(+)</text>
        <dbReference type="Rhea" id="RHEA:43220"/>
        <dbReference type="Rhea" id="RHEA-COMP:10412"/>
        <dbReference type="Rhea" id="RHEA-COMP:10413"/>
        <dbReference type="ChEBI" id="CHEBI:15378"/>
        <dbReference type="ChEBI" id="CHEBI:57856"/>
        <dbReference type="ChEBI" id="CHEBI:59789"/>
        <dbReference type="ChEBI" id="CHEBI:74269"/>
        <dbReference type="ChEBI" id="CHEBI:74481"/>
        <dbReference type="EC" id="2.1.1.242"/>
    </reaction>
</comment>
<comment type="subcellular location">
    <subcellularLocation>
        <location evidence="1">Cytoplasm</location>
    </subcellularLocation>
</comment>
<comment type="similarity">
    <text evidence="1">Belongs to the methyltransferase superfamily. RsmJ family.</text>
</comment>